<dbReference type="EC" id="3.6.4.13"/>
<dbReference type="EMBL" id="DP000009">
    <property type="protein sequence ID" value="ABF95549.1"/>
    <property type="molecule type" value="Genomic_DNA"/>
</dbReference>
<dbReference type="EMBL" id="AP008209">
    <property type="protein sequence ID" value="BAF11818.1"/>
    <property type="molecule type" value="Genomic_DNA"/>
</dbReference>
<dbReference type="EMBL" id="AP014959">
    <property type="protein sequence ID" value="BAS83834.1"/>
    <property type="molecule type" value="Genomic_DNA"/>
</dbReference>
<dbReference type="EMBL" id="AK103891">
    <property type="protein sequence ID" value="BAG96306.1"/>
    <property type="molecule type" value="mRNA"/>
</dbReference>
<dbReference type="RefSeq" id="XP_015633092.1">
    <property type="nucleotide sequence ID" value="XM_015777606.1"/>
</dbReference>
<dbReference type="SMR" id="Q10MH8"/>
<dbReference type="FunCoup" id="Q10MH8">
    <property type="interactions" value="2954"/>
</dbReference>
<dbReference type="STRING" id="39947.Q10MH8"/>
<dbReference type="PaxDb" id="39947-Q10MH8"/>
<dbReference type="EnsemblPlants" id="Os03t0308500-01">
    <property type="protein sequence ID" value="Os03t0308500-01"/>
    <property type="gene ID" value="Os03g0308500"/>
</dbReference>
<dbReference type="Gramene" id="Os03t0308500-01">
    <property type="protein sequence ID" value="Os03t0308500-01"/>
    <property type="gene ID" value="Os03g0308500"/>
</dbReference>
<dbReference type="KEGG" id="dosa:Os03g0308500"/>
<dbReference type="eggNOG" id="KOG0339">
    <property type="taxonomic scope" value="Eukaryota"/>
</dbReference>
<dbReference type="HOGENOM" id="CLU_003041_9_1_1"/>
<dbReference type="InParanoid" id="Q10MH8"/>
<dbReference type="OMA" id="DHTWEQT"/>
<dbReference type="OrthoDB" id="196131at2759"/>
<dbReference type="Proteomes" id="UP000000763">
    <property type="component" value="Chromosome 3"/>
</dbReference>
<dbReference type="Proteomes" id="UP000059680">
    <property type="component" value="Chromosome 3"/>
</dbReference>
<dbReference type="GO" id="GO:0005634">
    <property type="term" value="C:nucleus"/>
    <property type="evidence" value="ECO:0000318"/>
    <property type="project" value="GO_Central"/>
</dbReference>
<dbReference type="GO" id="GO:0005524">
    <property type="term" value="F:ATP binding"/>
    <property type="evidence" value="ECO:0007669"/>
    <property type="project" value="UniProtKB-KW"/>
</dbReference>
<dbReference type="GO" id="GO:0016887">
    <property type="term" value="F:ATP hydrolysis activity"/>
    <property type="evidence" value="ECO:0007669"/>
    <property type="project" value="RHEA"/>
</dbReference>
<dbReference type="GO" id="GO:0003723">
    <property type="term" value="F:RNA binding"/>
    <property type="evidence" value="ECO:0007669"/>
    <property type="project" value="UniProtKB-KW"/>
</dbReference>
<dbReference type="GO" id="GO:0003724">
    <property type="term" value="F:RNA helicase activity"/>
    <property type="evidence" value="ECO:0007669"/>
    <property type="project" value="UniProtKB-EC"/>
</dbReference>
<dbReference type="CDD" id="cd17952">
    <property type="entry name" value="DEADc_DDX42"/>
    <property type="match status" value="1"/>
</dbReference>
<dbReference type="CDD" id="cd18787">
    <property type="entry name" value="SF2_C_DEAD"/>
    <property type="match status" value="1"/>
</dbReference>
<dbReference type="FunFam" id="3.40.50.300:FF:000079">
    <property type="entry name" value="probable ATP-dependent RNA helicase DDX17"/>
    <property type="match status" value="1"/>
</dbReference>
<dbReference type="Gene3D" id="3.40.50.300">
    <property type="entry name" value="P-loop containing nucleotide triphosphate hydrolases"/>
    <property type="match status" value="2"/>
</dbReference>
<dbReference type="InterPro" id="IPR011545">
    <property type="entry name" value="DEAD/DEAH_box_helicase_dom"/>
</dbReference>
<dbReference type="InterPro" id="IPR014001">
    <property type="entry name" value="Helicase_ATP-bd"/>
</dbReference>
<dbReference type="InterPro" id="IPR001650">
    <property type="entry name" value="Helicase_C-like"/>
</dbReference>
<dbReference type="InterPro" id="IPR027417">
    <property type="entry name" value="P-loop_NTPase"/>
</dbReference>
<dbReference type="InterPro" id="IPR000629">
    <property type="entry name" value="RNA-helicase_DEAD-box_CS"/>
</dbReference>
<dbReference type="InterPro" id="IPR014014">
    <property type="entry name" value="RNA_helicase_DEAD_Q_motif"/>
</dbReference>
<dbReference type="PANTHER" id="PTHR47958">
    <property type="entry name" value="ATP-DEPENDENT RNA HELICASE DBP3"/>
    <property type="match status" value="1"/>
</dbReference>
<dbReference type="Pfam" id="PF00270">
    <property type="entry name" value="DEAD"/>
    <property type="match status" value="1"/>
</dbReference>
<dbReference type="Pfam" id="PF00271">
    <property type="entry name" value="Helicase_C"/>
    <property type="match status" value="1"/>
</dbReference>
<dbReference type="SMART" id="SM00487">
    <property type="entry name" value="DEXDc"/>
    <property type="match status" value="1"/>
</dbReference>
<dbReference type="SMART" id="SM00490">
    <property type="entry name" value="HELICc"/>
    <property type="match status" value="1"/>
</dbReference>
<dbReference type="SUPFAM" id="SSF52540">
    <property type="entry name" value="P-loop containing nucleoside triphosphate hydrolases"/>
    <property type="match status" value="2"/>
</dbReference>
<dbReference type="PROSITE" id="PS00039">
    <property type="entry name" value="DEAD_ATP_HELICASE"/>
    <property type="match status" value="1"/>
</dbReference>
<dbReference type="PROSITE" id="PS51192">
    <property type="entry name" value="HELICASE_ATP_BIND_1"/>
    <property type="match status" value="1"/>
</dbReference>
<dbReference type="PROSITE" id="PS51194">
    <property type="entry name" value="HELICASE_CTER"/>
    <property type="match status" value="1"/>
</dbReference>
<dbReference type="PROSITE" id="PS51195">
    <property type="entry name" value="Q_MOTIF"/>
    <property type="match status" value="1"/>
</dbReference>
<gene>
    <name type="ordered locus">Os03g0308500</name>
    <name type="ordered locus">LOC_Os03g19530</name>
</gene>
<feature type="chain" id="PRO_0000282500" description="DEAD-box ATP-dependent RNA helicase 24">
    <location>
        <begin position="1"/>
        <end position="770"/>
    </location>
</feature>
<feature type="domain" description="Helicase ATP-binding" evidence="1">
    <location>
        <begin position="250"/>
        <end position="425"/>
    </location>
</feature>
<feature type="domain" description="Helicase C-terminal" evidence="2">
    <location>
        <begin position="436"/>
        <end position="599"/>
    </location>
</feature>
<feature type="region of interest" description="Disordered" evidence="3">
    <location>
        <begin position="1"/>
        <end position="106"/>
    </location>
</feature>
<feature type="region of interest" description="Disordered" evidence="3">
    <location>
        <begin position="604"/>
        <end position="640"/>
    </location>
</feature>
<feature type="region of interest" description="Disordered" evidence="3">
    <location>
        <begin position="683"/>
        <end position="704"/>
    </location>
</feature>
<feature type="region of interest" description="Disordered" evidence="3">
    <location>
        <begin position="729"/>
        <end position="770"/>
    </location>
</feature>
<feature type="short sequence motif" description="Q motif">
    <location>
        <begin position="219"/>
        <end position="247"/>
    </location>
</feature>
<feature type="short sequence motif" description="DEAD box">
    <location>
        <begin position="373"/>
        <end position="376"/>
    </location>
</feature>
<feature type="compositionally biased region" description="Polar residues" evidence="3">
    <location>
        <begin position="14"/>
        <end position="26"/>
    </location>
</feature>
<feature type="compositionally biased region" description="Acidic residues" evidence="3">
    <location>
        <begin position="34"/>
        <end position="43"/>
    </location>
</feature>
<feature type="compositionally biased region" description="Low complexity" evidence="3">
    <location>
        <begin position="44"/>
        <end position="55"/>
    </location>
</feature>
<feature type="compositionally biased region" description="Basic and acidic residues" evidence="3">
    <location>
        <begin position="604"/>
        <end position="613"/>
    </location>
</feature>
<feature type="compositionally biased region" description="Gly residues" evidence="3">
    <location>
        <begin position="621"/>
        <end position="635"/>
    </location>
</feature>
<feature type="compositionally biased region" description="Low complexity" evidence="3">
    <location>
        <begin position="683"/>
        <end position="697"/>
    </location>
</feature>
<feature type="compositionally biased region" description="Polar residues" evidence="3">
    <location>
        <begin position="744"/>
        <end position="753"/>
    </location>
</feature>
<feature type="compositionally biased region" description="Basic and acidic residues" evidence="3">
    <location>
        <begin position="754"/>
        <end position="770"/>
    </location>
</feature>
<feature type="binding site" evidence="1">
    <location>
        <begin position="263"/>
        <end position="270"/>
    </location>
    <ligand>
        <name>ATP</name>
        <dbReference type="ChEBI" id="CHEBI:30616"/>
    </ligand>
</feature>
<comment type="catalytic activity">
    <reaction>
        <text>ATP + H2O = ADP + phosphate + H(+)</text>
        <dbReference type="Rhea" id="RHEA:13065"/>
        <dbReference type="ChEBI" id="CHEBI:15377"/>
        <dbReference type="ChEBI" id="CHEBI:15378"/>
        <dbReference type="ChEBI" id="CHEBI:30616"/>
        <dbReference type="ChEBI" id="CHEBI:43474"/>
        <dbReference type="ChEBI" id="CHEBI:456216"/>
        <dbReference type="EC" id="3.6.4.13"/>
    </reaction>
</comment>
<comment type="domain">
    <text>The Q motif is unique to and characteristic of the DEAD box family of RNA helicases and controls ATP binding and hydrolysis.</text>
</comment>
<comment type="similarity">
    <text evidence="4">Belongs to the DEAD box helicase family.</text>
</comment>
<organism>
    <name type="scientific">Oryza sativa subsp. japonica</name>
    <name type="common">Rice</name>
    <dbReference type="NCBI Taxonomy" id="39947"/>
    <lineage>
        <taxon>Eukaryota</taxon>
        <taxon>Viridiplantae</taxon>
        <taxon>Streptophyta</taxon>
        <taxon>Embryophyta</taxon>
        <taxon>Tracheophyta</taxon>
        <taxon>Spermatophyta</taxon>
        <taxon>Magnoliopsida</taxon>
        <taxon>Liliopsida</taxon>
        <taxon>Poales</taxon>
        <taxon>Poaceae</taxon>
        <taxon>BOP clade</taxon>
        <taxon>Oryzoideae</taxon>
        <taxon>Oryzeae</taxon>
        <taxon>Oryzinae</taxon>
        <taxon>Oryza</taxon>
        <taxon>Oryza sativa</taxon>
    </lineage>
</organism>
<reference key="1">
    <citation type="journal article" date="2005" name="Genome Res.">
        <title>Sequence, annotation, and analysis of synteny between rice chromosome 3 and diverged grass species.</title>
        <authorList>
            <consortium name="The rice chromosome 3 sequencing consortium"/>
            <person name="Buell C.R."/>
            <person name="Yuan Q."/>
            <person name="Ouyang S."/>
            <person name="Liu J."/>
            <person name="Zhu W."/>
            <person name="Wang A."/>
            <person name="Maiti R."/>
            <person name="Haas B."/>
            <person name="Wortman J."/>
            <person name="Pertea M."/>
            <person name="Jones K.M."/>
            <person name="Kim M."/>
            <person name="Overton L."/>
            <person name="Tsitrin T."/>
            <person name="Fadrosh D."/>
            <person name="Bera J."/>
            <person name="Weaver B."/>
            <person name="Jin S."/>
            <person name="Johri S."/>
            <person name="Reardon M."/>
            <person name="Webb K."/>
            <person name="Hill J."/>
            <person name="Moffat K."/>
            <person name="Tallon L."/>
            <person name="Van Aken S."/>
            <person name="Lewis M."/>
            <person name="Utterback T."/>
            <person name="Feldblyum T."/>
            <person name="Zismann V."/>
            <person name="Iobst S."/>
            <person name="Hsiao J."/>
            <person name="de Vazeille A.R."/>
            <person name="Salzberg S.L."/>
            <person name="White O."/>
            <person name="Fraser C.M."/>
            <person name="Yu Y."/>
            <person name="Kim H."/>
            <person name="Rambo T."/>
            <person name="Currie J."/>
            <person name="Collura K."/>
            <person name="Kernodle-Thompson S."/>
            <person name="Wei F."/>
            <person name="Kudrna K."/>
            <person name="Ammiraju J.S.S."/>
            <person name="Luo M."/>
            <person name="Goicoechea J.L."/>
            <person name="Wing R.A."/>
            <person name="Henry D."/>
            <person name="Oates R."/>
            <person name="Palmer M."/>
            <person name="Pries G."/>
            <person name="Saski C."/>
            <person name="Simmons J."/>
            <person name="Soderlund C."/>
            <person name="Nelson W."/>
            <person name="de la Bastide M."/>
            <person name="Spiegel L."/>
            <person name="Nascimento L."/>
            <person name="Huang E."/>
            <person name="Preston R."/>
            <person name="Zutavern T."/>
            <person name="Palmer L."/>
            <person name="O'Shaughnessy A."/>
            <person name="Dike S."/>
            <person name="McCombie W.R."/>
            <person name="Minx P."/>
            <person name="Cordum H."/>
            <person name="Wilson R."/>
            <person name="Jin W."/>
            <person name="Lee H.R."/>
            <person name="Jiang J."/>
            <person name="Jackson S."/>
        </authorList>
    </citation>
    <scope>NUCLEOTIDE SEQUENCE [LARGE SCALE GENOMIC DNA]</scope>
    <source>
        <strain>cv. Nipponbare</strain>
    </source>
</reference>
<reference key="2">
    <citation type="journal article" date="2005" name="Nature">
        <title>The map-based sequence of the rice genome.</title>
        <authorList>
            <consortium name="International rice genome sequencing project (IRGSP)"/>
        </authorList>
    </citation>
    <scope>NUCLEOTIDE SEQUENCE [LARGE SCALE GENOMIC DNA]</scope>
    <source>
        <strain>cv. Nipponbare</strain>
    </source>
</reference>
<reference key="3">
    <citation type="journal article" date="2008" name="Nucleic Acids Res.">
        <title>The rice annotation project database (RAP-DB): 2008 update.</title>
        <authorList>
            <consortium name="The rice annotation project (RAP)"/>
        </authorList>
    </citation>
    <scope>GENOME REANNOTATION</scope>
    <source>
        <strain>cv. Nipponbare</strain>
    </source>
</reference>
<reference key="4">
    <citation type="journal article" date="2013" name="Rice">
        <title>Improvement of the Oryza sativa Nipponbare reference genome using next generation sequence and optical map data.</title>
        <authorList>
            <person name="Kawahara Y."/>
            <person name="de la Bastide M."/>
            <person name="Hamilton J.P."/>
            <person name="Kanamori H."/>
            <person name="McCombie W.R."/>
            <person name="Ouyang S."/>
            <person name="Schwartz D.C."/>
            <person name="Tanaka T."/>
            <person name="Wu J."/>
            <person name="Zhou S."/>
            <person name="Childs K.L."/>
            <person name="Davidson R.M."/>
            <person name="Lin H."/>
            <person name="Quesada-Ocampo L."/>
            <person name="Vaillancourt B."/>
            <person name="Sakai H."/>
            <person name="Lee S.S."/>
            <person name="Kim J."/>
            <person name="Numa H."/>
            <person name="Itoh T."/>
            <person name="Buell C.R."/>
            <person name="Matsumoto T."/>
        </authorList>
    </citation>
    <scope>GENOME REANNOTATION</scope>
    <source>
        <strain>cv. Nipponbare</strain>
    </source>
</reference>
<reference key="5">
    <citation type="journal article" date="2003" name="Science">
        <title>Collection, mapping, and annotation of over 28,000 cDNA clones from japonica rice.</title>
        <authorList>
            <consortium name="The rice full-length cDNA consortium"/>
        </authorList>
    </citation>
    <scope>NUCLEOTIDE SEQUENCE [LARGE SCALE MRNA]</scope>
    <source>
        <strain>cv. Nipponbare</strain>
    </source>
</reference>
<name>RH24_ORYSJ</name>
<protein>
    <recommendedName>
        <fullName>DEAD-box ATP-dependent RNA helicase 24</fullName>
        <ecNumber>3.6.4.13</ecNumber>
    </recommendedName>
</protein>
<accession>Q10MH8</accession>
<accession>B7EVA9</accession>
<sequence>MSKRPKLGGFSIPRPTSYSFERSQPPQRLYVPADDPDLDDIAFSDDAAAPSDAPPAGGGGAAGDEEEIDPLDAFMAEIQEEIRAPPPAPKPEALRRADSDDEDDPVESFLRAKKDSGLALAADAMHAGYDSDEEVYAAAKAVDAGMMEYDSDDNPIVVDKKKIEPIPPLDHSTIEYEPFNKDFYEEKPSVSGMSEQEVADYMKSLAIRVSGFDVPRPIKSFADCGFPVQLMNAIAKQGYEKPTTIQCQALPIVLSGRDIIGIAKTGSGKTAAFVLPMIVHIMDQPELEKEEGPIGVVCAPTRELAHQIYLEAKKFAKPYNLRVAAVYGGVSKFDQFKELKAGCEIVIATPGRLIDLLKMKALKMFRATYLVLDEADRMFDLGFEPQIRSIVGQIRPDRQTLLFSATMPYKVERLAREILTDPIRVTVGQVGSANEDIKQVVNVLPSDAEKMPWLLEKLPGMIDDGDVLVFAAKKARVDEIESQLNQRGFRIAALHGDKDQASRMETLQKFKSGVYHVLVATDVAARGLDIKSIKTVVNFDIAKEMDMHIHRIGRTGRAGDKDGTAYTLITQKEVRFAGELVHCLIAAGQDVPNELMDLAMKDGRFRANRDSRKGGKKSGKGKGGGGGGGGGSGARGRGRGVRGVDFGLGIGYNAESGSVPAPRSAALNSLKTGMMQNFKSSFVSASSSNTPSNSAPSRGAPSSFVRPALRGFVSGGTIGGDANQARAVLPAPSFVPASRPAENTVENANPNPESSRDRTRERKRPSGWDR</sequence>
<keyword id="KW-0067">ATP-binding</keyword>
<keyword id="KW-0347">Helicase</keyword>
<keyword id="KW-0378">Hydrolase</keyword>
<keyword id="KW-0547">Nucleotide-binding</keyword>
<keyword id="KW-1185">Reference proteome</keyword>
<keyword id="KW-0694">RNA-binding</keyword>
<proteinExistence type="evidence at transcript level"/>
<evidence type="ECO:0000255" key="1">
    <source>
        <dbReference type="PROSITE-ProRule" id="PRU00541"/>
    </source>
</evidence>
<evidence type="ECO:0000255" key="2">
    <source>
        <dbReference type="PROSITE-ProRule" id="PRU00542"/>
    </source>
</evidence>
<evidence type="ECO:0000256" key="3">
    <source>
        <dbReference type="SAM" id="MobiDB-lite"/>
    </source>
</evidence>
<evidence type="ECO:0000305" key="4"/>